<name>SHRPN_BOVIN</name>
<protein>
    <recommendedName>
        <fullName>Sharpin</fullName>
    </recommendedName>
    <alternativeName>
        <fullName>Shank-associated RH domain-interacting protein</fullName>
    </alternativeName>
</protein>
<evidence type="ECO:0000250" key="1">
    <source>
        <dbReference type="UniProtKB" id="Q9EQL9"/>
    </source>
</evidence>
<evidence type="ECO:0000250" key="2">
    <source>
        <dbReference type="UniProtKB" id="Q9H0F6"/>
    </source>
</evidence>
<evidence type="ECO:0000255" key="3">
    <source>
        <dbReference type="PROSITE-ProRule" id="PRU00322"/>
    </source>
</evidence>
<evidence type="ECO:0000256" key="4">
    <source>
        <dbReference type="SAM" id="MobiDB-lite"/>
    </source>
</evidence>
<comment type="function">
    <text evidence="2">Component of the LUBAC complex which conjugates linear polyubiquitin chains in a head-to-tail manner to substrates and plays a key role in NF-kappa-B activation and regulation of inflammation. LUBAC conjugates linear polyubiquitin to IKBKG and RIPK1 and is involved in activation of the canonical NF-kappa-B and the JNK signaling pathways. Linear ubiquitination mediated by the LUBAC complex interferes with TNF-induced cell death and thereby prevents inflammation. LUBAC is recruited to the TNF-R1 signaling complex (TNF-RSC) following polyubiquitination of TNF-RSC components by BIRC2 and/or BIRC3 and to conjugate linear polyubiquitin to IKBKG and possibly other components contributing to the stability of the complex. The LUBAC complex is also involved in innate immunity by conjugating linear polyubiquitin chains at the surface of bacteria invading the cytosol to form the ubiquitin coat surrounding bacteria. LUBAC is not able to initiate formation of the bacterial ubiquitin coat, and can only promote formation of linear polyubiquitins on pre-existing ubiquitin. The bacterial ubiquitin coat acts as an 'eat-me' signal for xenophagy and promotes NF-kappa-B activation. Together with OTULIN, the LUBAC complex regulates the canonical Wnt signaling during angiogenesis.</text>
</comment>
<comment type="pathway">
    <text evidence="2">Protein modification; protein ubiquitination.</text>
</comment>
<comment type="subunit">
    <text evidence="1 2">Monomer and homodimer (By similarity). Component of the LUBAC complex (linear ubiquitin chain assembly complex) which consists of SHARPIN, RBCK1 and RNF31 (By similarity). LUBAC has a MW of approximately 600 kDa suggesting a heteromultimeric assembly of its subunits (By similarity). Associates with the TNF-R1 signaling complex (TNF-RSC) in a stimulation-dependent manner (By similarity). Interacts with EYA1, EYA2, SHANK1 and SHANK3 (via ANK repeats) (By similarity).</text>
</comment>
<comment type="subcellular location">
    <subcellularLocation>
        <location evidence="2">Cytoplasm</location>
        <location evidence="2">Cytosol</location>
    </subcellularLocation>
    <subcellularLocation>
        <location evidence="1">Synapse</location>
    </subcellularLocation>
    <text evidence="1">Enriched at synaptic sites in mature neurons where it colocalizes with SHANK1.</text>
</comment>
<comment type="domain">
    <text evidence="2">The Ubiquitin-like domain is required for the interaction with RNF31.</text>
</comment>
<comment type="domain">
    <text evidence="2">The RanBP2-type zinc fingers mediate the specific interaction with ubiquitin. Binds preferentially linear polyubiquitin chains and 'Lys-63'-linked polyubiquitin chains over 'Lys-48'-linked polyubiquitin chains. Also binds monoubiquitin.</text>
</comment>
<dbReference type="EMBL" id="AAFC03035445">
    <property type="status" value="NOT_ANNOTATED_CDS"/>
    <property type="molecule type" value="Genomic_DNA"/>
</dbReference>
<dbReference type="RefSeq" id="NP_001103236.1">
    <property type="nucleotide sequence ID" value="NM_001109766.1"/>
</dbReference>
<dbReference type="SMR" id="E1BDF2"/>
<dbReference type="FunCoup" id="E1BDF2">
    <property type="interactions" value="2080"/>
</dbReference>
<dbReference type="STRING" id="9913.ENSBTAP00000046530"/>
<dbReference type="PaxDb" id="9913-ENSBTAP00000046530"/>
<dbReference type="GeneID" id="512499"/>
<dbReference type="KEGG" id="bta:512499"/>
<dbReference type="CTD" id="81858"/>
<dbReference type="VEuPathDB" id="HostDB:ENSBTAG00000012235"/>
<dbReference type="eggNOG" id="KOG1815">
    <property type="taxonomic scope" value="Eukaryota"/>
</dbReference>
<dbReference type="HOGENOM" id="CLU_014998_0_1_1"/>
<dbReference type="InParanoid" id="E1BDF2"/>
<dbReference type="OMA" id="CIQQEKG"/>
<dbReference type="OrthoDB" id="261960at2759"/>
<dbReference type="TreeFam" id="TF323486"/>
<dbReference type="UniPathway" id="UPA00143"/>
<dbReference type="Proteomes" id="UP000009136">
    <property type="component" value="Chromosome 14"/>
</dbReference>
<dbReference type="Bgee" id="ENSBTAG00000012235">
    <property type="expression patterns" value="Expressed in laryngeal cartilage and 107 other cell types or tissues"/>
</dbReference>
<dbReference type="GO" id="GO:0005829">
    <property type="term" value="C:cytosol"/>
    <property type="evidence" value="ECO:0000250"/>
    <property type="project" value="UniProtKB"/>
</dbReference>
<dbReference type="GO" id="GO:0071797">
    <property type="term" value="C:LUBAC complex"/>
    <property type="evidence" value="ECO:0000250"/>
    <property type="project" value="UniProtKB"/>
</dbReference>
<dbReference type="GO" id="GO:0045202">
    <property type="term" value="C:synapse"/>
    <property type="evidence" value="ECO:0007669"/>
    <property type="project" value="UniProtKB-SubCell"/>
</dbReference>
<dbReference type="GO" id="GO:0031593">
    <property type="term" value="F:polyubiquitin modification-dependent protein binding"/>
    <property type="evidence" value="ECO:0000250"/>
    <property type="project" value="UniProtKB"/>
</dbReference>
<dbReference type="GO" id="GO:0043130">
    <property type="term" value="F:ubiquitin binding"/>
    <property type="evidence" value="ECO:0000318"/>
    <property type="project" value="GO_Central"/>
</dbReference>
<dbReference type="GO" id="GO:0004842">
    <property type="term" value="F:ubiquitin-protein transferase activity"/>
    <property type="evidence" value="ECO:0000318"/>
    <property type="project" value="GO_Central"/>
</dbReference>
<dbReference type="GO" id="GO:0008270">
    <property type="term" value="F:zinc ion binding"/>
    <property type="evidence" value="ECO:0007669"/>
    <property type="project" value="UniProtKB-KW"/>
</dbReference>
<dbReference type="GO" id="GO:0042742">
    <property type="term" value="P:defense response to bacterium"/>
    <property type="evidence" value="ECO:0000250"/>
    <property type="project" value="UniProtKB"/>
</dbReference>
<dbReference type="GO" id="GO:0050728">
    <property type="term" value="P:negative regulation of inflammatory response"/>
    <property type="evidence" value="ECO:0000250"/>
    <property type="project" value="UniProtKB"/>
</dbReference>
<dbReference type="GO" id="GO:0043123">
    <property type="term" value="P:positive regulation of canonical NF-kappaB signal transduction"/>
    <property type="evidence" value="ECO:0000250"/>
    <property type="project" value="UniProtKB"/>
</dbReference>
<dbReference type="GO" id="GO:0043161">
    <property type="term" value="P:proteasome-mediated ubiquitin-dependent protein catabolic process"/>
    <property type="evidence" value="ECO:0000318"/>
    <property type="project" value="GO_Central"/>
</dbReference>
<dbReference type="GO" id="GO:0097039">
    <property type="term" value="P:protein linear polyubiquitination"/>
    <property type="evidence" value="ECO:0000250"/>
    <property type="project" value="UniProtKB"/>
</dbReference>
<dbReference type="GO" id="GO:2000348">
    <property type="term" value="P:regulation of CD40 signaling pathway"/>
    <property type="evidence" value="ECO:0000250"/>
    <property type="project" value="UniProtKB"/>
</dbReference>
<dbReference type="GO" id="GO:0010803">
    <property type="term" value="P:regulation of tumor necrosis factor-mediated signaling pathway"/>
    <property type="evidence" value="ECO:0000250"/>
    <property type="project" value="UniProtKB"/>
</dbReference>
<dbReference type="CDD" id="cd13305">
    <property type="entry name" value="PH_SHARPIN"/>
    <property type="match status" value="1"/>
</dbReference>
<dbReference type="CDD" id="cd01799">
    <property type="entry name" value="Ubl_HOIL1"/>
    <property type="match status" value="1"/>
</dbReference>
<dbReference type="FunFam" id="3.10.20.90:FF:000130">
    <property type="entry name" value="SHANK-associated RH domain interactor"/>
    <property type="match status" value="1"/>
</dbReference>
<dbReference type="FunFam" id="2.30.29.30:FF:000331">
    <property type="entry name" value="sharpin isoform X1"/>
    <property type="match status" value="1"/>
</dbReference>
<dbReference type="FunFam" id="2.30.30.380:FF:000014">
    <property type="entry name" value="sharpin isoform X1"/>
    <property type="match status" value="1"/>
</dbReference>
<dbReference type="Gene3D" id="3.10.20.90">
    <property type="entry name" value="Phosphatidylinositol 3-kinase Catalytic Subunit, Chain A, domain 1"/>
    <property type="match status" value="1"/>
</dbReference>
<dbReference type="Gene3D" id="2.30.29.30">
    <property type="entry name" value="Pleckstrin-homology domain (PH domain)/Phosphotyrosine-binding domain (PTB)"/>
    <property type="match status" value="1"/>
</dbReference>
<dbReference type="Gene3D" id="2.30.30.380">
    <property type="entry name" value="Zn-finger domain of Sec23/24"/>
    <property type="match status" value="1"/>
</dbReference>
<dbReference type="InterPro" id="IPR051628">
    <property type="entry name" value="LUBAC_E3_Ligases"/>
</dbReference>
<dbReference type="InterPro" id="IPR011993">
    <property type="entry name" value="PH-like_dom_sf"/>
</dbReference>
<dbReference type="InterPro" id="IPR031912">
    <property type="entry name" value="Sharpin_PH"/>
</dbReference>
<dbReference type="InterPro" id="IPR029071">
    <property type="entry name" value="Ubiquitin-like_domsf"/>
</dbReference>
<dbReference type="InterPro" id="IPR001876">
    <property type="entry name" value="Znf_RanBP2"/>
</dbReference>
<dbReference type="InterPro" id="IPR036443">
    <property type="entry name" value="Znf_RanBP2_sf"/>
</dbReference>
<dbReference type="PANTHER" id="PTHR22770:SF43">
    <property type="entry name" value="SHARPIN"/>
    <property type="match status" value="1"/>
</dbReference>
<dbReference type="PANTHER" id="PTHR22770">
    <property type="entry name" value="UBIQUITIN CONJUGATING ENZYME 7 INTERACTING PROTEIN-RELATED"/>
    <property type="match status" value="1"/>
</dbReference>
<dbReference type="Pfam" id="PF25393">
    <property type="entry name" value="LTM"/>
    <property type="match status" value="1"/>
</dbReference>
<dbReference type="Pfam" id="PF16764">
    <property type="entry name" value="Sharpin_PH"/>
    <property type="match status" value="1"/>
</dbReference>
<dbReference type="SMART" id="SM00547">
    <property type="entry name" value="ZnF_RBZ"/>
    <property type="match status" value="1"/>
</dbReference>
<dbReference type="SUPFAM" id="SSF90209">
    <property type="entry name" value="Ran binding protein zinc finger-like"/>
    <property type="match status" value="1"/>
</dbReference>
<dbReference type="SUPFAM" id="SSF54236">
    <property type="entry name" value="Ubiquitin-like"/>
    <property type="match status" value="1"/>
</dbReference>
<dbReference type="PROSITE" id="PS01358">
    <property type="entry name" value="ZF_RANBP2_1"/>
    <property type="match status" value="1"/>
</dbReference>
<dbReference type="PROSITE" id="PS50199">
    <property type="entry name" value="ZF_RANBP2_2"/>
    <property type="match status" value="1"/>
</dbReference>
<gene>
    <name type="primary">SHARPIN</name>
</gene>
<organism>
    <name type="scientific">Bos taurus</name>
    <name type="common">Bovine</name>
    <dbReference type="NCBI Taxonomy" id="9913"/>
    <lineage>
        <taxon>Eukaryota</taxon>
        <taxon>Metazoa</taxon>
        <taxon>Chordata</taxon>
        <taxon>Craniata</taxon>
        <taxon>Vertebrata</taxon>
        <taxon>Euteleostomi</taxon>
        <taxon>Mammalia</taxon>
        <taxon>Eutheria</taxon>
        <taxon>Laurasiatheria</taxon>
        <taxon>Artiodactyla</taxon>
        <taxon>Ruminantia</taxon>
        <taxon>Pecora</taxon>
        <taxon>Bovidae</taxon>
        <taxon>Bovinae</taxon>
        <taxon>Bos</taxon>
    </lineage>
</organism>
<sequence length="409" mass="43394">MAPPAGGTAAGSDPGSAAVLLAVHVAVRPLGAGLDVAAQPRRLQLSADPERPGRFRLEMLGAGPGAVILEWPLESVSYTVRGPCQHELQPPPGGPGTLSLHFANPQEAQRWAALVRDATVEGQNGSDSLPPALGPETRPVSPPSPLEVPTPKAPKPKVDLPWSPGDLMEKEELAGRLTRAVEGGDEKGAAQAAAILAQRHVALRVQLQEAYFPPGPIRLQVTVEDAASSAHVSLQVHPHCTIRALQEQVFSEFGFPPAVQRWVIGRCLCVPEHSLAFYGVQRDGDPAFLYLLSAPREAPGRSPQRPQKVDGELGRLFPQSLGLPPTPQPTSSSLPSPLQPGWPCPSCTFINAPSRPGCEMCSTQRPCAWDPLPTASIQQLPKVTRREDGPSLPGPRSLDPLLNLSGNLC</sequence>
<feature type="chain" id="PRO_0000409513" description="Sharpin">
    <location>
        <begin position="1"/>
        <end position="409"/>
    </location>
</feature>
<feature type="domain" description="Ubiquitin-like">
    <location>
        <begin position="217"/>
        <end position="280"/>
    </location>
</feature>
<feature type="zinc finger region" description="RanBP2-type" evidence="3">
    <location>
        <begin position="338"/>
        <end position="367"/>
    </location>
</feature>
<feature type="region of interest" description="Self-association" evidence="1">
    <location>
        <begin position="1"/>
        <end position="178"/>
    </location>
</feature>
<feature type="region of interest" description="Disordered" evidence="4">
    <location>
        <begin position="121"/>
        <end position="164"/>
    </location>
</feature>
<feature type="region of interest" description="Interaction with SHANK1" evidence="1">
    <location>
        <begin position="173"/>
        <end position="300"/>
    </location>
</feature>
<feature type="region of interest" description="Disordered" evidence="4">
    <location>
        <begin position="315"/>
        <end position="337"/>
    </location>
</feature>
<feature type="region of interest" description="Disordered" evidence="4">
    <location>
        <begin position="384"/>
        <end position="409"/>
    </location>
</feature>
<feature type="compositionally biased region" description="Pro residues" evidence="4">
    <location>
        <begin position="140"/>
        <end position="153"/>
    </location>
</feature>
<feature type="compositionally biased region" description="Low complexity" evidence="4">
    <location>
        <begin position="318"/>
        <end position="336"/>
    </location>
</feature>
<feature type="modified residue" description="Phosphoserine" evidence="2">
    <location>
        <position position="163"/>
    </location>
</feature>
<feature type="modified residue" description="Phosphoserine" evidence="2">
    <location>
        <position position="302"/>
    </location>
</feature>
<accession>E1BDF2</accession>
<keyword id="KW-0963">Cytoplasm</keyword>
<keyword id="KW-0479">Metal-binding</keyword>
<keyword id="KW-0597">Phosphoprotein</keyword>
<keyword id="KW-1185">Reference proteome</keyword>
<keyword id="KW-0770">Synapse</keyword>
<keyword id="KW-0833">Ubl conjugation pathway</keyword>
<keyword id="KW-0862">Zinc</keyword>
<keyword id="KW-0863">Zinc-finger</keyword>
<proteinExistence type="inferred from homology"/>
<reference key="1">
    <citation type="journal article" date="2009" name="Science">
        <title>The genome sequence of taurine cattle: a window to ruminant biology and evolution.</title>
        <authorList>
            <consortium name="The bovine genome sequencing and analysis consortium"/>
        </authorList>
    </citation>
    <scope>NUCLEOTIDE SEQUENCE [LARGE SCALE GENOMIC DNA]</scope>
</reference>